<keyword id="KW-0030">Aminoacyl-tRNA synthetase</keyword>
<keyword id="KW-0067">ATP-binding</keyword>
<keyword id="KW-0963">Cytoplasm</keyword>
<keyword id="KW-0436">Ligase</keyword>
<keyword id="KW-0547">Nucleotide-binding</keyword>
<keyword id="KW-0648">Protein biosynthesis</keyword>
<comment type="function">
    <text evidence="1">Catalyzes the attachment of valine to tRNA(Val). As ValRS can inadvertently accommodate and process structurally similar amino acids such as threonine, to avoid such errors, it has a 'posttransfer' editing activity that hydrolyzes mischarged Thr-tRNA(Val) in a tRNA-dependent manner.</text>
</comment>
<comment type="catalytic activity">
    <reaction evidence="1">
        <text>tRNA(Val) + L-valine + ATP = L-valyl-tRNA(Val) + AMP + diphosphate</text>
        <dbReference type="Rhea" id="RHEA:10704"/>
        <dbReference type="Rhea" id="RHEA-COMP:9672"/>
        <dbReference type="Rhea" id="RHEA-COMP:9708"/>
        <dbReference type="ChEBI" id="CHEBI:30616"/>
        <dbReference type="ChEBI" id="CHEBI:33019"/>
        <dbReference type="ChEBI" id="CHEBI:57762"/>
        <dbReference type="ChEBI" id="CHEBI:78442"/>
        <dbReference type="ChEBI" id="CHEBI:78537"/>
        <dbReference type="ChEBI" id="CHEBI:456215"/>
        <dbReference type="EC" id="6.1.1.9"/>
    </reaction>
</comment>
<comment type="subcellular location">
    <subcellularLocation>
        <location evidence="1">Cytoplasm</location>
    </subcellularLocation>
</comment>
<comment type="domain">
    <text evidence="1">ValRS has two distinct active sites: one for aminoacylation and one for editing. The misactivated threonine is translocated from the active site to the editing site.</text>
</comment>
<comment type="similarity">
    <text evidence="1">Belongs to the class-I aminoacyl-tRNA synthetase family. ValS type 2 subfamily.</text>
</comment>
<proteinExistence type="inferred from homology"/>
<feature type="chain" id="PRO_0000224626" description="Valine--tRNA ligase">
    <location>
        <begin position="1"/>
        <end position="869"/>
    </location>
</feature>
<feature type="short sequence motif" description="'HIGH' region">
    <location>
        <begin position="47"/>
        <end position="57"/>
    </location>
</feature>
<feature type="short sequence motif" description="'KMSKS' region">
    <location>
        <begin position="521"/>
        <end position="525"/>
    </location>
</feature>
<feature type="binding site" evidence="1">
    <location>
        <position position="524"/>
    </location>
    <ligand>
        <name>ATP</name>
        <dbReference type="ChEBI" id="CHEBI:30616"/>
    </ligand>
</feature>
<gene>
    <name evidence="1" type="primary">valS</name>
    <name type="ordered locus">Mbar_A1976</name>
</gene>
<evidence type="ECO:0000255" key="1">
    <source>
        <dbReference type="HAMAP-Rule" id="MF_02005"/>
    </source>
</evidence>
<name>SYV_METBF</name>
<sequence length="869" mass="98973">MTESEIPKEYNASEVEEKWMDKWDLSMYHFNWGEDPRPQYIIDTPPPYPTGNFHIGNALNWCYIDFVARYKRMRGYNVMFPQGWDCHGLPTEVKVEEIHGITKNQVPRAEFRKMCRELTAGNIDKMRKTMLRLGFSVDWSNEFITMDPSYFVKTQKSFVRMYNKDYIYHEEHPVNWCPRCETAIAFAEVEYETRQTKLNFVHFDKVDIATTRPELMAACVAVAVNPEDKRYSQYVGQEITVPLFGQKVTLIADEDVEPEFGTGAVMICTFGDKQDVRWWVKYELPLIKAIDKQGKMTKAAGKYEGLSIAECREAVVADLKAAGFLYDQKPLEQNVGLCWRCDTPIEILSEPQWFVKIDNDAILKAADEIKWYPEYMKVRLQNWTGTMEWDWCISRQRIFATPIPIWHCKKCGEVMVAEESWLPIDPNEAAPKKACACGSTEFEPETDVLDTWMDSSITALHVTGWESEHDLRLPAQIRPQGHDIIRTWAFYTILRSLALEGKRPWDSIVINGMVLGPDGHKMSKSLGNVISPEEVTTKYSADAFRQWGAVGGSTGSDVMFRWKDVVSASRFLQKMWSIYRFSMSHLKGFGQEDAEKFQKDSLHIIDRWLLSKLNRLVDTATKELDDYQFDSTFKAIRGFAWEVLADNYLELVKGRLYGDDPEGKRAAQYVLYRTTKTLSLLLAPFIPFFAEELYSRLSDESVHTQAWPAVDESLINEEAEAAGELIKEITGEVRRYKSELGMALNAPLKKLEIYNADIDTGDIAGAANSKVELMEGAPSFEYVPVEVKPNMGILGPRFRKDAGAVVKALKAESPAAIEAQAASGKITVNVDGKPIELEPEAVEIRKEVISGGREVDVLEVRGAVVVIVR</sequence>
<organism>
    <name type="scientific">Methanosarcina barkeri (strain Fusaro / DSM 804)</name>
    <dbReference type="NCBI Taxonomy" id="269797"/>
    <lineage>
        <taxon>Archaea</taxon>
        <taxon>Methanobacteriati</taxon>
        <taxon>Methanobacteriota</taxon>
        <taxon>Stenosarchaea group</taxon>
        <taxon>Methanomicrobia</taxon>
        <taxon>Methanosarcinales</taxon>
        <taxon>Methanosarcinaceae</taxon>
        <taxon>Methanosarcina</taxon>
    </lineage>
</organism>
<reference key="1">
    <citation type="journal article" date="2006" name="J. Bacteriol.">
        <title>The Methanosarcina barkeri genome: comparative analysis with Methanosarcina acetivorans and Methanosarcina mazei reveals extensive rearrangement within methanosarcinal genomes.</title>
        <authorList>
            <person name="Maeder D.L."/>
            <person name="Anderson I."/>
            <person name="Brettin T.S."/>
            <person name="Bruce D.C."/>
            <person name="Gilna P."/>
            <person name="Han C.S."/>
            <person name="Lapidus A."/>
            <person name="Metcalf W.W."/>
            <person name="Saunders E."/>
            <person name="Tapia R."/>
            <person name="Sowers K.R."/>
        </authorList>
    </citation>
    <scope>NUCLEOTIDE SEQUENCE [LARGE SCALE GENOMIC DNA]</scope>
    <source>
        <strain>Fusaro / DSM 804</strain>
    </source>
</reference>
<accession>Q46B32</accession>
<protein>
    <recommendedName>
        <fullName evidence="1">Valine--tRNA ligase</fullName>
        <ecNumber evidence="1">6.1.1.9</ecNumber>
    </recommendedName>
    <alternativeName>
        <fullName evidence="1">Valyl-tRNA synthetase</fullName>
        <shortName evidence="1">ValRS</shortName>
    </alternativeName>
</protein>
<dbReference type="EC" id="6.1.1.9" evidence="1"/>
<dbReference type="EMBL" id="CP000099">
    <property type="protein sequence ID" value="AAZ70910.1"/>
    <property type="molecule type" value="Genomic_DNA"/>
</dbReference>
<dbReference type="SMR" id="Q46B32"/>
<dbReference type="STRING" id="269797.Mbar_A1976"/>
<dbReference type="PaxDb" id="269797-Mbar_A1976"/>
<dbReference type="KEGG" id="mba:Mbar_A1976"/>
<dbReference type="eggNOG" id="arCOG00808">
    <property type="taxonomic scope" value="Archaea"/>
</dbReference>
<dbReference type="HOGENOM" id="CLU_001493_0_2_2"/>
<dbReference type="OrthoDB" id="23906at2157"/>
<dbReference type="GO" id="GO:0005829">
    <property type="term" value="C:cytosol"/>
    <property type="evidence" value="ECO:0007669"/>
    <property type="project" value="TreeGrafter"/>
</dbReference>
<dbReference type="GO" id="GO:0002161">
    <property type="term" value="F:aminoacyl-tRNA deacylase activity"/>
    <property type="evidence" value="ECO:0007669"/>
    <property type="project" value="InterPro"/>
</dbReference>
<dbReference type="GO" id="GO:0005524">
    <property type="term" value="F:ATP binding"/>
    <property type="evidence" value="ECO:0007669"/>
    <property type="project" value="UniProtKB-UniRule"/>
</dbReference>
<dbReference type="GO" id="GO:0004832">
    <property type="term" value="F:valine-tRNA ligase activity"/>
    <property type="evidence" value="ECO:0007669"/>
    <property type="project" value="UniProtKB-UniRule"/>
</dbReference>
<dbReference type="GO" id="GO:0006438">
    <property type="term" value="P:valyl-tRNA aminoacylation"/>
    <property type="evidence" value="ECO:0007669"/>
    <property type="project" value="UniProtKB-UniRule"/>
</dbReference>
<dbReference type="CDD" id="cd07962">
    <property type="entry name" value="Anticodon_Ia_Val"/>
    <property type="match status" value="1"/>
</dbReference>
<dbReference type="CDD" id="cd00817">
    <property type="entry name" value="ValRS_core"/>
    <property type="match status" value="1"/>
</dbReference>
<dbReference type="FunFam" id="3.30.720.200:FF:000001">
    <property type="entry name" value="Glycine--tRNA ligase 2"/>
    <property type="match status" value="1"/>
</dbReference>
<dbReference type="FunFam" id="1.10.730.10:FF:000033">
    <property type="entry name" value="Valine--tRNA ligase"/>
    <property type="match status" value="1"/>
</dbReference>
<dbReference type="FunFam" id="3.40.50.620:FF:000192">
    <property type="entry name" value="Valine--tRNA ligase"/>
    <property type="match status" value="1"/>
</dbReference>
<dbReference type="FunFam" id="3.40.50.620:FF:000324">
    <property type="entry name" value="Valine--tRNA ligase"/>
    <property type="match status" value="1"/>
</dbReference>
<dbReference type="Gene3D" id="3.30.720.200">
    <property type="match status" value="1"/>
</dbReference>
<dbReference type="Gene3D" id="3.40.50.620">
    <property type="entry name" value="HUPs"/>
    <property type="match status" value="2"/>
</dbReference>
<dbReference type="Gene3D" id="1.10.730.10">
    <property type="entry name" value="Isoleucyl-tRNA Synthetase, Domain 1"/>
    <property type="match status" value="1"/>
</dbReference>
<dbReference type="HAMAP" id="MF_02005">
    <property type="entry name" value="Val_tRNA_synth_type2"/>
    <property type="match status" value="1"/>
</dbReference>
<dbReference type="InterPro" id="IPR001412">
    <property type="entry name" value="aa-tRNA-synth_I_CS"/>
</dbReference>
<dbReference type="InterPro" id="IPR002300">
    <property type="entry name" value="aa-tRNA-synth_Ia"/>
</dbReference>
<dbReference type="InterPro" id="IPR033705">
    <property type="entry name" value="Anticodon_Ia_Val"/>
</dbReference>
<dbReference type="InterPro" id="IPR013155">
    <property type="entry name" value="M/V/L/I-tRNA-synth_anticd-bd"/>
</dbReference>
<dbReference type="InterPro" id="IPR014729">
    <property type="entry name" value="Rossmann-like_a/b/a_fold"/>
</dbReference>
<dbReference type="InterPro" id="IPR009080">
    <property type="entry name" value="tRNAsynth_Ia_anticodon-bd"/>
</dbReference>
<dbReference type="InterPro" id="IPR009008">
    <property type="entry name" value="Val/Leu/Ile-tRNA-synth_edit"/>
</dbReference>
<dbReference type="InterPro" id="IPR022874">
    <property type="entry name" value="Valine-tRNA_ligase_type_2"/>
</dbReference>
<dbReference type="InterPro" id="IPR002303">
    <property type="entry name" value="Valyl-tRNA_ligase"/>
</dbReference>
<dbReference type="NCBIfam" id="NF009687">
    <property type="entry name" value="PRK13208.1"/>
    <property type="match status" value="1"/>
</dbReference>
<dbReference type="NCBIfam" id="TIGR00422">
    <property type="entry name" value="valS"/>
    <property type="match status" value="1"/>
</dbReference>
<dbReference type="PANTHER" id="PTHR11946:SF93">
    <property type="entry name" value="VALINE--TRNA LIGASE, CHLOROPLASTIC_MITOCHONDRIAL 2"/>
    <property type="match status" value="1"/>
</dbReference>
<dbReference type="PANTHER" id="PTHR11946">
    <property type="entry name" value="VALYL-TRNA SYNTHETASES"/>
    <property type="match status" value="1"/>
</dbReference>
<dbReference type="Pfam" id="PF08264">
    <property type="entry name" value="Anticodon_1"/>
    <property type="match status" value="1"/>
</dbReference>
<dbReference type="Pfam" id="PF19302">
    <property type="entry name" value="DUF5915"/>
    <property type="match status" value="1"/>
</dbReference>
<dbReference type="Pfam" id="PF00133">
    <property type="entry name" value="tRNA-synt_1"/>
    <property type="match status" value="1"/>
</dbReference>
<dbReference type="PRINTS" id="PR00986">
    <property type="entry name" value="TRNASYNTHVAL"/>
</dbReference>
<dbReference type="SUPFAM" id="SSF47323">
    <property type="entry name" value="Anticodon-binding domain of a subclass of class I aminoacyl-tRNA synthetases"/>
    <property type="match status" value="1"/>
</dbReference>
<dbReference type="SUPFAM" id="SSF52374">
    <property type="entry name" value="Nucleotidylyl transferase"/>
    <property type="match status" value="1"/>
</dbReference>
<dbReference type="SUPFAM" id="SSF50677">
    <property type="entry name" value="ValRS/IleRS/LeuRS editing domain"/>
    <property type="match status" value="1"/>
</dbReference>
<dbReference type="PROSITE" id="PS00178">
    <property type="entry name" value="AA_TRNA_LIGASE_I"/>
    <property type="match status" value="1"/>
</dbReference>